<keyword id="KW-0963">Cytoplasm</keyword>
<keyword id="KW-0275">Fatty acid biosynthesis</keyword>
<keyword id="KW-0276">Fatty acid metabolism</keyword>
<keyword id="KW-0413">Isomerase</keyword>
<keyword id="KW-0444">Lipid biosynthesis</keyword>
<keyword id="KW-0443">Lipid metabolism</keyword>
<keyword id="KW-0456">Lyase</keyword>
<sequence length="171" mass="18730">MTTASSFEKDELLKCGHGEMFGAGNAQLPVGNMLMMDRITHISTEGGVYGKGEIIAELDINPDLWFFECHFPGDPVMPGCLGLDAMWQLVGFFLGWKGNKGRGRALGSGEVKFTGQILPTAKKVTFHINLKRVIERKLVMGIADGSVKVDGREIYTAKDLRVGLFTSTDNF</sequence>
<protein>
    <recommendedName>
        <fullName evidence="1">3-hydroxydecanoyl-[acyl-carrier-protein] dehydratase</fullName>
        <ecNumber evidence="1">4.2.1.59</ecNumber>
    </recommendedName>
    <alternativeName>
        <fullName evidence="1">3-hydroxyacyl-[acyl-carrier-protein] dehydratase FabA</fullName>
    </alternativeName>
    <alternativeName>
        <fullName evidence="1">Beta-hydroxydecanoyl thioester dehydrase</fullName>
    </alternativeName>
    <alternativeName>
        <fullName evidence="1">Trans-2-decenoyl-[acyl-carrier-protein] isomerase</fullName>
        <ecNumber evidence="1">5.3.3.14</ecNumber>
    </alternativeName>
</protein>
<reference key="1">
    <citation type="submission" date="2007-06" db="EMBL/GenBank/DDBJ databases">
        <title>Complete sequence of Marinomonas sp. MWYL1.</title>
        <authorList>
            <consortium name="US DOE Joint Genome Institute"/>
            <person name="Copeland A."/>
            <person name="Lucas S."/>
            <person name="Lapidus A."/>
            <person name="Barry K."/>
            <person name="Glavina del Rio T."/>
            <person name="Dalin E."/>
            <person name="Tice H."/>
            <person name="Pitluck S."/>
            <person name="Kiss H."/>
            <person name="Brettin T."/>
            <person name="Bruce D."/>
            <person name="Detter J.C."/>
            <person name="Han C."/>
            <person name="Schmutz J."/>
            <person name="Larimer F."/>
            <person name="Land M."/>
            <person name="Hauser L."/>
            <person name="Kyrpides N."/>
            <person name="Kim E."/>
            <person name="Johnston A.W.B."/>
            <person name="Todd J.D."/>
            <person name="Rogers R."/>
            <person name="Wexler M."/>
            <person name="Bond P.L."/>
            <person name="Li Y."/>
            <person name="Richardson P."/>
        </authorList>
    </citation>
    <scope>NUCLEOTIDE SEQUENCE [LARGE SCALE GENOMIC DNA]</scope>
    <source>
        <strain>MWYL1</strain>
    </source>
</reference>
<organism>
    <name type="scientific">Marinomonas sp. (strain MWYL1)</name>
    <dbReference type="NCBI Taxonomy" id="400668"/>
    <lineage>
        <taxon>Bacteria</taxon>
        <taxon>Pseudomonadati</taxon>
        <taxon>Pseudomonadota</taxon>
        <taxon>Gammaproteobacteria</taxon>
        <taxon>Oceanospirillales</taxon>
        <taxon>Oceanospirillaceae</taxon>
        <taxon>Marinomonas</taxon>
    </lineage>
</organism>
<name>FABA_MARMS</name>
<proteinExistence type="inferred from homology"/>
<dbReference type="EC" id="4.2.1.59" evidence="1"/>
<dbReference type="EC" id="5.3.3.14" evidence="1"/>
<dbReference type="EMBL" id="CP000749">
    <property type="protein sequence ID" value="ABR73136.1"/>
    <property type="molecule type" value="Genomic_DNA"/>
</dbReference>
<dbReference type="SMR" id="A6W357"/>
<dbReference type="STRING" id="400668.Mmwyl1_4241"/>
<dbReference type="KEGG" id="mmw:Mmwyl1_4241"/>
<dbReference type="eggNOG" id="COG0764">
    <property type="taxonomic scope" value="Bacteria"/>
</dbReference>
<dbReference type="HOGENOM" id="CLU_097925_0_0_6"/>
<dbReference type="OrthoDB" id="9786735at2"/>
<dbReference type="UniPathway" id="UPA00094"/>
<dbReference type="GO" id="GO:0005737">
    <property type="term" value="C:cytoplasm"/>
    <property type="evidence" value="ECO:0007669"/>
    <property type="project" value="UniProtKB-SubCell"/>
</dbReference>
<dbReference type="GO" id="GO:0019171">
    <property type="term" value="F:(3R)-hydroxyacyl-[acyl-carrier-protein] dehydratase activity"/>
    <property type="evidence" value="ECO:0007669"/>
    <property type="project" value="UniProtKB-UniRule"/>
</dbReference>
<dbReference type="GO" id="GO:0034017">
    <property type="term" value="F:trans-2-decenoyl-acyl-carrier-protein isomerase activity"/>
    <property type="evidence" value="ECO:0007669"/>
    <property type="project" value="UniProtKB-UniRule"/>
</dbReference>
<dbReference type="GO" id="GO:0006636">
    <property type="term" value="P:unsaturated fatty acid biosynthetic process"/>
    <property type="evidence" value="ECO:0007669"/>
    <property type="project" value="UniProtKB-UniRule"/>
</dbReference>
<dbReference type="CDD" id="cd01287">
    <property type="entry name" value="FabA"/>
    <property type="match status" value="1"/>
</dbReference>
<dbReference type="Gene3D" id="3.10.129.10">
    <property type="entry name" value="Hotdog Thioesterase"/>
    <property type="match status" value="1"/>
</dbReference>
<dbReference type="HAMAP" id="MF_00405">
    <property type="entry name" value="FabA"/>
    <property type="match status" value="1"/>
</dbReference>
<dbReference type="InterPro" id="IPR010083">
    <property type="entry name" value="FabA"/>
</dbReference>
<dbReference type="InterPro" id="IPR013114">
    <property type="entry name" value="FabA_FabZ"/>
</dbReference>
<dbReference type="InterPro" id="IPR029069">
    <property type="entry name" value="HotDog_dom_sf"/>
</dbReference>
<dbReference type="NCBIfam" id="TIGR01749">
    <property type="entry name" value="fabA"/>
    <property type="match status" value="1"/>
</dbReference>
<dbReference type="NCBIfam" id="NF003509">
    <property type="entry name" value="PRK05174.1"/>
    <property type="match status" value="1"/>
</dbReference>
<dbReference type="PANTHER" id="PTHR30272">
    <property type="entry name" value="3-HYDROXYACYL-[ACYL-CARRIER-PROTEIN] DEHYDRATASE"/>
    <property type="match status" value="1"/>
</dbReference>
<dbReference type="PANTHER" id="PTHR30272:SF8">
    <property type="entry name" value="3-HYDROXYDECANOYL-[ACYL-CARRIER-PROTEIN] DEHYDRATASE"/>
    <property type="match status" value="1"/>
</dbReference>
<dbReference type="Pfam" id="PF07977">
    <property type="entry name" value="FabA"/>
    <property type="match status" value="1"/>
</dbReference>
<dbReference type="SUPFAM" id="SSF54637">
    <property type="entry name" value="Thioesterase/thiol ester dehydrase-isomerase"/>
    <property type="match status" value="1"/>
</dbReference>
<comment type="function">
    <text evidence="1">Necessary for the introduction of cis unsaturation into fatty acids. Catalyzes the dehydration of (3R)-3-hydroxydecanoyl-ACP to E-(2)-decenoyl-ACP and then its isomerization to Z-(3)-decenoyl-ACP. Can catalyze the dehydratase reaction for beta-hydroxyacyl-ACPs with saturated chain lengths up to 16:0, being most active on intermediate chain length.</text>
</comment>
<comment type="catalytic activity">
    <reaction evidence="1">
        <text>a (3R)-hydroxyacyl-[ACP] = a (2E)-enoyl-[ACP] + H2O</text>
        <dbReference type="Rhea" id="RHEA:13097"/>
        <dbReference type="Rhea" id="RHEA-COMP:9925"/>
        <dbReference type="Rhea" id="RHEA-COMP:9945"/>
        <dbReference type="ChEBI" id="CHEBI:15377"/>
        <dbReference type="ChEBI" id="CHEBI:78784"/>
        <dbReference type="ChEBI" id="CHEBI:78827"/>
        <dbReference type="EC" id="4.2.1.59"/>
    </reaction>
</comment>
<comment type="catalytic activity">
    <reaction evidence="1">
        <text>(3R)-hydroxydecanoyl-[ACP] = (2E)-decenoyl-[ACP] + H2O</text>
        <dbReference type="Rhea" id="RHEA:41860"/>
        <dbReference type="Rhea" id="RHEA-COMP:9638"/>
        <dbReference type="Rhea" id="RHEA-COMP:9639"/>
        <dbReference type="ChEBI" id="CHEBI:15377"/>
        <dbReference type="ChEBI" id="CHEBI:78466"/>
        <dbReference type="ChEBI" id="CHEBI:78467"/>
    </reaction>
</comment>
<comment type="catalytic activity">
    <reaction evidence="1">
        <text>(2E)-decenoyl-[ACP] = (3Z)-decenoyl-[ACP]</text>
        <dbReference type="Rhea" id="RHEA:23568"/>
        <dbReference type="Rhea" id="RHEA-COMP:9639"/>
        <dbReference type="Rhea" id="RHEA-COMP:9927"/>
        <dbReference type="ChEBI" id="CHEBI:78467"/>
        <dbReference type="ChEBI" id="CHEBI:78798"/>
        <dbReference type="EC" id="5.3.3.14"/>
    </reaction>
</comment>
<comment type="pathway">
    <text evidence="1">Lipid metabolism; fatty acid biosynthesis.</text>
</comment>
<comment type="subunit">
    <text evidence="1">Homodimer.</text>
</comment>
<comment type="subcellular location">
    <subcellularLocation>
        <location evidence="1">Cytoplasm</location>
    </subcellularLocation>
</comment>
<comment type="similarity">
    <text evidence="1">Belongs to the thioester dehydratase family. FabA subfamily.</text>
</comment>
<feature type="chain" id="PRO_1000080428" description="3-hydroxydecanoyl-[acyl-carrier-protein] dehydratase">
    <location>
        <begin position="1"/>
        <end position="171"/>
    </location>
</feature>
<feature type="active site" evidence="1">
    <location>
        <position position="70"/>
    </location>
</feature>
<gene>
    <name evidence="1" type="primary">fabA</name>
    <name type="ordered locus">Mmwyl1_4241</name>
</gene>
<evidence type="ECO:0000255" key="1">
    <source>
        <dbReference type="HAMAP-Rule" id="MF_00405"/>
    </source>
</evidence>
<accession>A6W357</accession>